<evidence type="ECO:0000250" key="1">
    <source>
        <dbReference type="UniProtKB" id="P36683"/>
    </source>
</evidence>
<evidence type="ECO:0000305" key="2"/>
<keyword id="KW-0004">4Fe-4S</keyword>
<keyword id="KW-0408">Iron</keyword>
<keyword id="KW-0411">Iron-sulfur</keyword>
<keyword id="KW-0456">Lyase</keyword>
<keyword id="KW-0479">Metal-binding</keyword>
<keyword id="KW-1185">Reference proteome</keyword>
<keyword id="KW-0694">RNA-binding</keyword>
<keyword id="KW-0816">Tricarboxylic acid cycle</keyword>
<dbReference type="EC" id="4.2.1.3" evidence="1"/>
<dbReference type="EC" id="4.2.1.99" evidence="1"/>
<dbReference type="EMBL" id="BA000022">
    <property type="protein sequence ID" value="BAA18689.1"/>
    <property type="molecule type" value="Genomic_DNA"/>
</dbReference>
<dbReference type="PIR" id="S76777">
    <property type="entry name" value="S76777"/>
</dbReference>
<dbReference type="SMR" id="P74582"/>
<dbReference type="IntAct" id="P74582">
    <property type="interactions" value="4"/>
</dbReference>
<dbReference type="STRING" id="1148.gene:10500460"/>
<dbReference type="PaxDb" id="1148-1653778"/>
<dbReference type="EnsemblBacteria" id="BAA18689">
    <property type="protein sequence ID" value="BAA18689"/>
    <property type="gene ID" value="BAA18689"/>
</dbReference>
<dbReference type="KEGG" id="syn:slr0665"/>
<dbReference type="eggNOG" id="COG1049">
    <property type="taxonomic scope" value="Bacteria"/>
</dbReference>
<dbReference type="InParanoid" id="P74582"/>
<dbReference type="PhylomeDB" id="P74582"/>
<dbReference type="UniPathway" id="UPA00223">
    <property type="reaction ID" value="UER00718"/>
</dbReference>
<dbReference type="UniPathway" id="UPA00946"/>
<dbReference type="Proteomes" id="UP000001425">
    <property type="component" value="Chromosome"/>
</dbReference>
<dbReference type="GO" id="GO:0005829">
    <property type="term" value="C:cytosol"/>
    <property type="evidence" value="ECO:0000318"/>
    <property type="project" value="GO_Central"/>
</dbReference>
<dbReference type="GO" id="GO:0047456">
    <property type="term" value="F:2-methylisocitrate dehydratase activity"/>
    <property type="evidence" value="ECO:0000250"/>
    <property type="project" value="UniProtKB"/>
</dbReference>
<dbReference type="GO" id="GO:0051539">
    <property type="term" value="F:4 iron, 4 sulfur cluster binding"/>
    <property type="evidence" value="ECO:0000250"/>
    <property type="project" value="UniProtKB"/>
</dbReference>
<dbReference type="GO" id="GO:0003994">
    <property type="term" value="F:aconitate hydratase activity"/>
    <property type="evidence" value="ECO:0000250"/>
    <property type="project" value="UniProtKB"/>
</dbReference>
<dbReference type="GO" id="GO:0046872">
    <property type="term" value="F:metal ion binding"/>
    <property type="evidence" value="ECO:0007669"/>
    <property type="project" value="UniProtKB-KW"/>
</dbReference>
<dbReference type="GO" id="GO:0003730">
    <property type="term" value="F:mRNA 3'-UTR binding"/>
    <property type="evidence" value="ECO:0000250"/>
    <property type="project" value="UniProtKB"/>
</dbReference>
<dbReference type="GO" id="GO:0003729">
    <property type="term" value="F:mRNA binding"/>
    <property type="evidence" value="ECO:0000250"/>
    <property type="project" value="UniProtKB"/>
</dbReference>
<dbReference type="GO" id="GO:0019629">
    <property type="term" value="P:propionate catabolic process, 2-methylcitrate cycle"/>
    <property type="evidence" value="ECO:0000250"/>
    <property type="project" value="UniProtKB"/>
</dbReference>
<dbReference type="GO" id="GO:0006099">
    <property type="term" value="P:tricarboxylic acid cycle"/>
    <property type="evidence" value="ECO:0000250"/>
    <property type="project" value="UniProtKB"/>
</dbReference>
<dbReference type="CDD" id="cd01581">
    <property type="entry name" value="AcnB"/>
    <property type="match status" value="1"/>
</dbReference>
<dbReference type="CDD" id="cd01576">
    <property type="entry name" value="AcnB_Swivel"/>
    <property type="match status" value="1"/>
</dbReference>
<dbReference type="FunFam" id="1.25.40.310:FF:000001">
    <property type="entry name" value="Aconitate hydratase B"/>
    <property type="match status" value="1"/>
</dbReference>
<dbReference type="FunFam" id="3.20.19.10:FF:000004">
    <property type="entry name" value="Aconitate hydratase B"/>
    <property type="match status" value="1"/>
</dbReference>
<dbReference type="FunFam" id="3.30.499.10:FF:000001">
    <property type="entry name" value="Aconitate hydratase B"/>
    <property type="match status" value="1"/>
</dbReference>
<dbReference type="FunFam" id="3.30.499.10:FF:000008">
    <property type="entry name" value="Aconitate hydratase B"/>
    <property type="match status" value="1"/>
</dbReference>
<dbReference type="Gene3D" id="3.40.1060.10">
    <property type="entry name" value="Aconitase, Domain 2"/>
    <property type="match status" value="1"/>
</dbReference>
<dbReference type="Gene3D" id="3.30.499.10">
    <property type="entry name" value="Aconitase, domain 3"/>
    <property type="match status" value="2"/>
</dbReference>
<dbReference type="Gene3D" id="3.20.19.10">
    <property type="entry name" value="Aconitase, domain 4"/>
    <property type="match status" value="1"/>
</dbReference>
<dbReference type="Gene3D" id="1.25.40.310">
    <property type="entry name" value="Aconitate B, HEAT-like domain"/>
    <property type="match status" value="1"/>
</dbReference>
<dbReference type="InterPro" id="IPR015931">
    <property type="entry name" value="Acnase/IPM_dHydase_lsu_aba_1/3"/>
</dbReference>
<dbReference type="InterPro" id="IPR001030">
    <property type="entry name" value="Acoase/IPM_deHydtase_lsu_aba"/>
</dbReference>
<dbReference type="InterPro" id="IPR015928">
    <property type="entry name" value="Aconitase/3IPM_dehydase_swvl"/>
</dbReference>
<dbReference type="InterPro" id="IPR050926">
    <property type="entry name" value="Aconitase/IPM_isomerase"/>
</dbReference>
<dbReference type="InterPro" id="IPR018136">
    <property type="entry name" value="Aconitase_4Fe-4S_BS"/>
</dbReference>
<dbReference type="InterPro" id="IPR036008">
    <property type="entry name" value="Aconitase_4Fe-4S_dom"/>
</dbReference>
<dbReference type="InterPro" id="IPR004406">
    <property type="entry name" value="Aconitase_B"/>
</dbReference>
<dbReference type="InterPro" id="IPR015933">
    <property type="entry name" value="Aconitase_B_HEAT-like_dom"/>
</dbReference>
<dbReference type="InterPro" id="IPR036288">
    <property type="entry name" value="Aconitase_B_HEAT-like_dom_sf"/>
</dbReference>
<dbReference type="InterPro" id="IPR015929">
    <property type="entry name" value="Aconitase_B_swivel"/>
</dbReference>
<dbReference type="InterPro" id="IPR015932">
    <property type="entry name" value="Aconitase_dom2"/>
</dbReference>
<dbReference type="NCBIfam" id="TIGR00117">
    <property type="entry name" value="acnB"/>
    <property type="match status" value="1"/>
</dbReference>
<dbReference type="NCBIfam" id="NF006690">
    <property type="entry name" value="PRK09238.1"/>
    <property type="match status" value="1"/>
</dbReference>
<dbReference type="PANTHER" id="PTHR43160">
    <property type="entry name" value="ACONITATE HYDRATASE B"/>
    <property type="match status" value="1"/>
</dbReference>
<dbReference type="PANTHER" id="PTHR43160:SF4">
    <property type="entry name" value="ACONITATE HYDRATASE B"/>
    <property type="match status" value="1"/>
</dbReference>
<dbReference type="Pfam" id="PF00330">
    <property type="entry name" value="Aconitase"/>
    <property type="match status" value="1"/>
</dbReference>
<dbReference type="Pfam" id="PF06434">
    <property type="entry name" value="Aconitase_2_N"/>
    <property type="match status" value="1"/>
</dbReference>
<dbReference type="Pfam" id="PF11791">
    <property type="entry name" value="Aconitase_B_N"/>
    <property type="match status" value="1"/>
</dbReference>
<dbReference type="PIRSF" id="PIRSF036687">
    <property type="entry name" value="AcnB"/>
    <property type="match status" value="1"/>
</dbReference>
<dbReference type="SUPFAM" id="SSF74778">
    <property type="entry name" value="Aconitase B, N-terminal domain"/>
    <property type="match status" value="1"/>
</dbReference>
<dbReference type="SUPFAM" id="SSF53732">
    <property type="entry name" value="Aconitase iron-sulfur domain"/>
    <property type="match status" value="1"/>
</dbReference>
<dbReference type="SUPFAM" id="SSF52016">
    <property type="entry name" value="LeuD/IlvD-like"/>
    <property type="match status" value="1"/>
</dbReference>
<dbReference type="PROSITE" id="PS00450">
    <property type="entry name" value="ACONITASE_1"/>
    <property type="match status" value="1"/>
</dbReference>
<dbReference type="PROSITE" id="PS01244">
    <property type="entry name" value="ACONITASE_2"/>
    <property type="match status" value="1"/>
</dbReference>
<sequence>MLQAYRRHVADRQKLGIPPLPLNAQQTTELCELLKNPPEAEKEELMMLLRDRVPPGVDEAAYVKAGFLTAIAKGEVTCPLISGQGAVDLLGTMIGGYNVQSLIELLKSKDTNIASAAATALSKTLLVFDAFNDVLHLSDTNGYAKQVIDAWAEGAWFINKPEVPERITVTVFKVPGETNTDDLSPAPHATTRPDIPLHALAMLEAKMPEGLGTIAELKQKGHPVAYVGDVVGTGSSRKSAINSVLWHIGTDIPFVPNKRAGGYILGGKIAPIFFNTAEDSGALPIECDVNQLNTGDVITIYPREGKITNKAGETITTFQLKPETILDEVRAGGRIPLLIGRALTDKTREALGLSPSPLFVRPTAPADTGKGFTLAQKMVGKACGVQGIRPGTSCEPIMTTVGSQDTTGPMTRDELKELACLGFNADLTLQTFCHTAAYPKPVDIKTHKDLPDFFSTRGGVALRPGDGIIHSWLNRMLLPDTVGTGGDSHTRFPLGISFPAGSGLVAFAAALGVMPLDMPESVLVKFTGELQPGVTLRDIVNAIPWVAMQQGKLTVGKGDKVNVFNGRIMEMEGLPDLKVEQAFELTDATAERSCSGSTIKLSEETVAEYLRSNVVLMKNMIARGYQDARTLLRRIAKMEEWLANPSLMSGDADAEYADVIEVNLDEIKEPIVAAPNDPDNVKLMSECAGDVIHEVFIGSCMTNIGHYRAAAKILEGAGTVKGRLWICPPTRMDEQQLREEGIYGIFAAAGARTEMPGCSLCMGNQARVEDGVTVFSTSTRNFNNRMGKGAQVYLGSAELAAVCALLGKIPTVEEYLAIVSEKVAPFEGELYRYLNFNEIDNFEDFGRVIPLDQMPKIEDILGMPVGAK</sequence>
<comment type="function">
    <text evidence="1">Involved in the catabolism of short chain fatty acids (SCFA) via the tricarboxylic acid (TCA)(acetyl degradation route) and probably via the 2-methylcitrate cycle I (propionate degradation route). Catalyzes the reversible isomerization of citrate to isocitrate via cis-aconitate. Catalyzes the hydration of 2-methyl-cis-aconitate to yield (2R,3S)-2-methylisocitrate. The apo form of AcnB functions as a RNA-binding regulatory protein.</text>
</comment>
<comment type="catalytic activity">
    <reaction evidence="1">
        <text>citrate = D-threo-isocitrate</text>
        <dbReference type="Rhea" id="RHEA:10336"/>
        <dbReference type="ChEBI" id="CHEBI:15562"/>
        <dbReference type="ChEBI" id="CHEBI:16947"/>
        <dbReference type="EC" id="4.2.1.3"/>
    </reaction>
</comment>
<comment type="catalytic activity">
    <reaction evidence="1">
        <text>(2S,3R)-3-hydroxybutane-1,2,3-tricarboxylate = 2-methyl-cis-aconitate + H2O</text>
        <dbReference type="Rhea" id="RHEA:17941"/>
        <dbReference type="ChEBI" id="CHEBI:15377"/>
        <dbReference type="ChEBI" id="CHEBI:57429"/>
        <dbReference type="ChEBI" id="CHEBI:57872"/>
        <dbReference type="EC" id="4.2.1.99"/>
    </reaction>
</comment>
<comment type="cofactor">
    <cofactor evidence="1">
        <name>[4Fe-4S] cluster</name>
        <dbReference type="ChEBI" id="CHEBI:49883"/>
    </cofactor>
    <text evidence="1">Binds 1 [4Fe-4S] cluster per subunit.</text>
</comment>
<comment type="pathway">
    <text evidence="1">Carbohydrate metabolism; tricarboxylic acid cycle; isocitrate from oxaloacetate: step 2/2.</text>
</comment>
<comment type="pathway">
    <text evidence="1">Organic acid metabolism; propanoate degradation.</text>
</comment>
<comment type="subunit">
    <text evidence="1">Monomer.</text>
</comment>
<comment type="similarity">
    <text evidence="2">Belongs to the aconitase/IPM isomerase family.</text>
</comment>
<name>ACNB_SYNY3</name>
<feature type="chain" id="PRO_0000076678" description="Aconitate hydratase B">
    <location>
        <begin position="1"/>
        <end position="868"/>
    </location>
</feature>
<feature type="binding site" evidence="1">
    <location>
        <position position="192"/>
    </location>
    <ligand>
        <name>substrate</name>
    </ligand>
</feature>
<feature type="binding site" evidence="1">
    <location>
        <begin position="235"/>
        <end position="237"/>
    </location>
    <ligand>
        <name>substrate</name>
    </ligand>
</feature>
<feature type="binding site" evidence="1">
    <location>
        <begin position="404"/>
        <end position="406"/>
    </location>
    <ligand>
        <name>substrate</name>
    </ligand>
</feature>
<feature type="binding site" evidence="1">
    <location>
        <position position="488"/>
    </location>
    <ligand>
        <name>substrate</name>
    </ligand>
</feature>
<feature type="binding site" evidence="1">
    <location>
        <position position="700"/>
    </location>
    <ligand>
        <name>[4Fe-4S] cluster</name>
        <dbReference type="ChEBI" id="CHEBI:49883"/>
    </ligand>
</feature>
<feature type="binding site" evidence="1">
    <location>
        <position position="758"/>
    </location>
    <ligand>
        <name>[4Fe-4S] cluster</name>
        <dbReference type="ChEBI" id="CHEBI:49883"/>
    </ligand>
</feature>
<feature type="binding site" evidence="1">
    <location>
        <position position="761"/>
    </location>
    <ligand>
        <name>[4Fe-4S] cluster</name>
        <dbReference type="ChEBI" id="CHEBI:49883"/>
    </ligand>
</feature>
<feature type="binding site" evidence="1">
    <location>
        <position position="780"/>
    </location>
    <ligand>
        <name>substrate</name>
    </ligand>
</feature>
<feature type="binding site" evidence="1">
    <location>
        <position position="785"/>
    </location>
    <ligand>
        <name>substrate</name>
    </ligand>
</feature>
<accession>P74582</accession>
<protein>
    <recommendedName>
        <fullName evidence="1">Aconitate hydratase B</fullName>
        <shortName evidence="1">ACN</shortName>
        <shortName evidence="1">Aconitase</shortName>
        <ecNumber evidence="1">4.2.1.3</ecNumber>
    </recommendedName>
    <alternativeName>
        <fullName evidence="1">(2R,3S)-2-methylisocitrate dehydratase</fullName>
    </alternativeName>
    <alternativeName>
        <fullName evidence="1">(2S,3R)-3-hydroxybutane-1,2,3-tricarboxylate dehydratase</fullName>
    </alternativeName>
    <alternativeName>
        <fullName evidence="1">2-methyl-cis-aconitate hydratase</fullName>
        <ecNumber evidence="1">4.2.1.99</ecNumber>
    </alternativeName>
    <alternativeName>
        <fullName evidence="1">Iron-responsive protein-like</fullName>
        <shortName evidence="1">IRP-like</shortName>
    </alternativeName>
    <alternativeName>
        <fullName evidence="1">RNA-binding protein</fullName>
    </alternativeName>
</protein>
<reference key="1">
    <citation type="journal article" date="1996" name="DNA Res.">
        <title>Sequence analysis of the genome of the unicellular cyanobacterium Synechocystis sp. strain PCC6803. II. Sequence determination of the entire genome and assignment of potential protein-coding regions.</title>
        <authorList>
            <person name="Kaneko T."/>
            <person name="Sato S."/>
            <person name="Kotani H."/>
            <person name="Tanaka A."/>
            <person name="Asamizu E."/>
            <person name="Nakamura Y."/>
            <person name="Miyajima N."/>
            <person name="Hirosawa M."/>
            <person name="Sugiura M."/>
            <person name="Sasamoto S."/>
            <person name="Kimura T."/>
            <person name="Hosouchi T."/>
            <person name="Matsuno A."/>
            <person name="Muraki A."/>
            <person name="Nakazaki N."/>
            <person name="Naruo K."/>
            <person name="Okumura S."/>
            <person name="Shimpo S."/>
            <person name="Takeuchi C."/>
            <person name="Wada T."/>
            <person name="Watanabe A."/>
            <person name="Yamada M."/>
            <person name="Yasuda M."/>
            <person name="Tabata S."/>
        </authorList>
    </citation>
    <scope>NUCLEOTIDE SEQUENCE [LARGE SCALE GENOMIC DNA]</scope>
    <source>
        <strain>ATCC 27184 / PCC 6803 / Kazusa</strain>
    </source>
</reference>
<gene>
    <name type="primary">acnB</name>
    <name type="ordered locus">slr0665</name>
</gene>
<organism>
    <name type="scientific">Synechocystis sp. (strain ATCC 27184 / PCC 6803 / Kazusa)</name>
    <dbReference type="NCBI Taxonomy" id="1111708"/>
    <lineage>
        <taxon>Bacteria</taxon>
        <taxon>Bacillati</taxon>
        <taxon>Cyanobacteriota</taxon>
        <taxon>Cyanophyceae</taxon>
        <taxon>Synechococcales</taxon>
        <taxon>Merismopediaceae</taxon>
        <taxon>Synechocystis</taxon>
    </lineage>
</organism>
<proteinExistence type="inferred from homology"/>